<feature type="chain" id="PRO_0000107916" description="Arylamine N-acetyltransferase / N-hydroxyarylamine O-acetyltransferase">
    <location>
        <begin position="1"/>
        <end position="281"/>
    </location>
</feature>
<feature type="active site" description="Acyl-thioester intermediate" evidence="7 8 9">
    <location>
        <position position="69"/>
    </location>
</feature>
<feature type="active site" evidence="7">
    <location>
        <position position="107"/>
    </location>
</feature>
<feature type="active site" evidence="7">
    <location>
        <position position="122"/>
    </location>
</feature>
<feature type="mutagenesis site" description="Loss of O- and N-acetyltransferase activities." evidence="2">
    <original>C</original>
    <variation>A</variation>
    <location>
        <position position="69"/>
    </location>
</feature>
<feature type="helix" evidence="10">
    <location>
        <begin position="3"/>
        <end position="11"/>
    </location>
</feature>
<feature type="helix" evidence="10">
    <location>
        <begin position="22"/>
        <end position="35"/>
    </location>
</feature>
<feature type="helix" evidence="10">
    <location>
        <begin position="41"/>
        <end position="44"/>
    </location>
</feature>
<feature type="helix" evidence="10">
    <location>
        <begin position="55"/>
        <end position="60"/>
    </location>
</feature>
<feature type="turn" evidence="10">
    <location>
        <begin position="61"/>
        <end position="63"/>
    </location>
</feature>
<feature type="helix" evidence="10">
    <location>
        <begin position="69"/>
        <end position="82"/>
    </location>
</feature>
<feature type="strand" evidence="10">
    <location>
        <begin position="87"/>
        <end position="94"/>
    </location>
</feature>
<feature type="strand" evidence="10">
    <location>
        <begin position="107"/>
        <end position="114"/>
    </location>
</feature>
<feature type="strand" evidence="10">
    <location>
        <begin position="117"/>
        <end position="121"/>
    </location>
</feature>
<feature type="strand" evidence="10">
    <location>
        <begin position="134"/>
        <end position="136"/>
    </location>
</feature>
<feature type="strand" evidence="10">
    <location>
        <begin position="142"/>
        <end position="144"/>
    </location>
</feature>
<feature type="strand" evidence="10">
    <location>
        <begin position="147"/>
        <end position="152"/>
    </location>
</feature>
<feature type="strand" evidence="10">
    <location>
        <begin position="157"/>
        <end position="174"/>
    </location>
</feature>
<feature type="helix" evidence="10">
    <location>
        <begin position="181"/>
        <end position="193"/>
    </location>
</feature>
<feature type="helix" evidence="10">
    <location>
        <begin position="198"/>
        <end position="200"/>
    </location>
</feature>
<feature type="strand" evidence="10">
    <location>
        <begin position="204"/>
        <end position="208"/>
    </location>
</feature>
<feature type="strand" evidence="10">
    <location>
        <begin position="210"/>
        <end position="212"/>
    </location>
</feature>
<feature type="strand" evidence="10">
    <location>
        <begin position="214"/>
        <end position="218"/>
    </location>
</feature>
<feature type="strand" evidence="10">
    <location>
        <begin position="221"/>
        <end position="226"/>
    </location>
</feature>
<feature type="helix" evidence="10">
    <location>
        <begin position="239"/>
        <end position="248"/>
    </location>
</feature>
<feature type="turn" evidence="10">
    <location>
        <begin position="257"/>
        <end position="259"/>
    </location>
</feature>
<feature type="helix" evidence="10">
    <location>
        <begin position="263"/>
        <end position="271"/>
    </location>
</feature>
<reference key="1">
    <citation type="journal article" date="1992" name="J. Biol. Chem.">
        <title>Involvement of Cys69 residue in the catalytic mechanism of N-hydroxyarylamine O-acetyltransferase of Salmonella typhimurium. Sequence similarity at the amino acid level suggests a common catalytic mechanism of acetyltransferase for S. typhimurium and higher organisms.</title>
        <authorList>
            <person name="Watanabe M."/>
            <person name="Sofuni T."/>
            <person name="Nohmi T."/>
        </authorList>
    </citation>
    <scope>NUCLEOTIDE SEQUENCE [GENOMIC DNA]</scope>
    <scope>FUNCTION</scope>
    <scope>CATALYTIC ACTIVITY</scope>
    <scope>ACTIVITY REGULATION</scope>
    <scope>BIOPHYSICOCHEMICAL PROPERTIES</scope>
    <scope>SUBCELLULAR LOCATION</scope>
    <scope>MUTAGENESIS OF CYS-69</scope>
    <scope>ACTIVE SITE</scope>
</reference>
<reference key="2">
    <citation type="journal article" date="1994" name="Environ. Health Perspect.">
        <title>N-hydroxyarylamine O-acetyltransferase of Salmonella typhimurium: proposal for a common catalytic mechanism of arylamine acetyltransferase enzymes.</title>
        <authorList>
            <person name="Watanabe M."/>
            <person name="Igarashi T."/>
            <person name="Kaminuma T."/>
            <person name="Sofuni T."/>
            <person name="Nohmi T."/>
        </authorList>
    </citation>
    <scope>NUCLEOTIDE SEQUENCE [GENOMIC DNA]</scope>
    <scope>FUNCTION</scope>
    <scope>CATALYTIC ACTIVITY</scope>
    <scope>ACTIVITY REGULATION</scope>
    <scope>SUBCELLULAR LOCATION</scope>
    <scope>ACTIVE SITE</scope>
    <source>
        <strain>ATCC 29631 / TA 1538</strain>
    </source>
</reference>
<reference key="3">
    <citation type="journal article" date="2001" name="Nature">
        <title>Complete genome sequence of Salmonella enterica serovar Typhimurium LT2.</title>
        <authorList>
            <person name="McClelland M."/>
            <person name="Sanderson K.E."/>
            <person name="Spieth J."/>
            <person name="Clifton S.W."/>
            <person name="Latreille P."/>
            <person name="Courtney L."/>
            <person name="Porwollik S."/>
            <person name="Ali J."/>
            <person name="Dante M."/>
            <person name="Du F."/>
            <person name="Hou S."/>
            <person name="Layman D."/>
            <person name="Leonard S."/>
            <person name="Nguyen C."/>
            <person name="Scott K."/>
            <person name="Holmes A."/>
            <person name="Grewal N."/>
            <person name="Mulvaney E."/>
            <person name="Ryan E."/>
            <person name="Sun H."/>
            <person name="Florea L."/>
            <person name="Miller W."/>
            <person name="Stoneking T."/>
            <person name="Nhan M."/>
            <person name="Waterston R."/>
            <person name="Wilson R.K."/>
        </authorList>
    </citation>
    <scope>NUCLEOTIDE SEQUENCE [LARGE SCALE GENOMIC DNA]</scope>
    <source>
        <strain>LT2 / SGSC1412 / ATCC 700720</strain>
    </source>
</reference>
<reference key="4">
    <citation type="journal article" date="2000" name="Nat. Struct. Biol.">
        <title>Structure of arylamine N-acetyltransferase reveals a catalytic triad.</title>
        <authorList>
            <person name="Sinclair J.C."/>
            <person name="Sandy J."/>
            <person name="Delgoda R."/>
            <person name="Sim E."/>
            <person name="Noble M.E.M."/>
        </authorList>
    </citation>
    <scope>X-RAY CRYSTALLOGRAPHY (2.8 ANGSTROMS)</scope>
    <scope>SUBUNIT STRUCTURE</scope>
    <scope>ACTIVE SITES</scope>
</reference>
<sequence>MTSFLHAYFTRLHCQPLGVPTVEALRTLHLAHNCAIPFENLDVLLPREIQLDETALEEKLLYARRGGYCFELNGLFERALRDIGFNVRSLLGRVILSHPASLPPRTHRLLLVDVEDEQWIADVGFGGQTLTAPLRLQAEIAQQTPHGEYRLMQEGSTWILQFRHHEHWQSMYCFDLGVQQQSDHVMGNFWSAHWPQSHFRHHLLMCRHLPDGGKLTLTNFHFTRYHQGHAVEQVNVPDVPSLYQLLQQQFGLGVNDVKHGFTEAELAAVMAAFDTHPEAGK</sequence>
<gene>
    <name type="primary">nhoA</name>
    <name type="ordered locus">STM1582</name>
</gene>
<dbReference type="EC" id="2.3.1.118" evidence="2 3"/>
<dbReference type="EC" id="2.3.1.5" evidence="2 3"/>
<dbReference type="EMBL" id="D90301">
    <property type="protein sequence ID" value="BAA14331.1"/>
    <property type="molecule type" value="Genomic_DNA"/>
</dbReference>
<dbReference type="EMBL" id="S76130">
    <property type="protein sequence ID" value="AAB33787.1"/>
    <property type="molecule type" value="Genomic_DNA"/>
</dbReference>
<dbReference type="EMBL" id="AE006468">
    <property type="protein sequence ID" value="AAL20500.1"/>
    <property type="molecule type" value="Genomic_DNA"/>
</dbReference>
<dbReference type="PIR" id="A38090">
    <property type="entry name" value="A38090"/>
</dbReference>
<dbReference type="RefSeq" id="NP_460541.1">
    <property type="nucleotide sequence ID" value="NC_003197.2"/>
</dbReference>
<dbReference type="RefSeq" id="WP_000200329.1">
    <property type="nucleotide sequence ID" value="NC_003197.2"/>
</dbReference>
<dbReference type="PDB" id="1E2T">
    <property type="method" value="X-ray"/>
    <property type="resolution" value="2.80 A"/>
    <property type="chains" value="A/B/C/D/E/F/G/H=1-281"/>
</dbReference>
<dbReference type="PDBsum" id="1E2T"/>
<dbReference type="SMR" id="Q00267"/>
<dbReference type="STRING" id="99287.STM1582"/>
<dbReference type="PaxDb" id="99287-STM1582"/>
<dbReference type="GeneID" id="1253100"/>
<dbReference type="KEGG" id="stm:STM1582"/>
<dbReference type="PATRIC" id="fig|99287.12.peg.1673"/>
<dbReference type="HOGENOM" id="CLU_049918_1_1_6"/>
<dbReference type="OMA" id="CYEHNTL"/>
<dbReference type="PhylomeDB" id="Q00267"/>
<dbReference type="BioCyc" id="SENT99287:STM1582-MONOMER"/>
<dbReference type="BRENDA" id="2.3.1.5">
    <property type="organism ID" value="5542"/>
</dbReference>
<dbReference type="SABIO-RK" id="Q00267"/>
<dbReference type="EvolutionaryTrace" id="Q00267"/>
<dbReference type="Proteomes" id="UP000001014">
    <property type="component" value="Chromosome"/>
</dbReference>
<dbReference type="GO" id="GO:0005737">
    <property type="term" value="C:cytoplasm"/>
    <property type="evidence" value="ECO:0007669"/>
    <property type="project" value="UniProtKB-SubCell"/>
</dbReference>
<dbReference type="GO" id="GO:0004060">
    <property type="term" value="F:arylamine N-acetyltransferase activity"/>
    <property type="evidence" value="ECO:0000318"/>
    <property type="project" value="GO_Central"/>
</dbReference>
<dbReference type="GO" id="GO:0046990">
    <property type="term" value="F:N-hydroxyarylamine O-acetyltransferase activity"/>
    <property type="evidence" value="ECO:0007669"/>
    <property type="project" value="UniProtKB-EC"/>
</dbReference>
<dbReference type="FunFam" id="3.30.1120.150:FF:000001">
    <property type="entry name" value="N-hydroxyarylamine O-acetyltransferase"/>
    <property type="match status" value="1"/>
</dbReference>
<dbReference type="FunFam" id="2.40.128.150:FF:000001">
    <property type="entry name" value="N-hydroxyarylamine O-acetyltransferase NhoA"/>
    <property type="match status" value="1"/>
</dbReference>
<dbReference type="Gene3D" id="3.30.1120.150">
    <property type="match status" value="1"/>
</dbReference>
<dbReference type="Gene3D" id="6.10.140.1930">
    <property type="match status" value="1"/>
</dbReference>
<dbReference type="Gene3D" id="2.40.128.150">
    <property type="entry name" value="Cysteine proteinases"/>
    <property type="match status" value="1"/>
</dbReference>
<dbReference type="InterPro" id="IPR001447">
    <property type="entry name" value="Arylamine_N-AcTrfase"/>
</dbReference>
<dbReference type="InterPro" id="IPR038765">
    <property type="entry name" value="Papain-like_cys_pep_sf"/>
</dbReference>
<dbReference type="NCBIfam" id="NF011621">
    <property type="entry name" value="PRK15047.1"/>
    <property type="match status" value="1"/>
</dbReference>
<dbReference type="PANTHER" id="PTHR11786:SF0">
    <property type="entry name" value="ARYLAMINE N-ACETYLTRANSFERASE 4-RELATED"/>
    <property type="match status" value="1"/>
</dbReference>
<dbReference type="PANTHER" id="PTHR11786">
    <property type="entry name" value="N-HYDROXYARYLAMINE O-ACETYLTRANSFERASE"/>
    <property type="match status" value="1"/>
</dbReference>
<dbReference type="Pfam" id="PF00797">
    <property type="entry name" value="Acetyltransf_2"/>
    <property type="match status" value="1"/>
</dbReference>
<dbReference type="PRINTS" id="PR01543">
    <property type="entry name" value="ANATRNSFRASE"/>
</dbReference>
<dbReference type="SUPFAM" id="SSF54001">
    <property type="entry name" value="Cysteine proteinases"/>
    <property type="match status" value="1"/>
</dbReference>
<accession>Q00267</accession>
<proteinExistence type="evidence at protein level"/>
<organism>
    <name type="scientific">Salmonella typhimurium (strain LT2 / SGSC1412 / ATCC 700720)</name>
    <dbReference type="NCBI Taxonomy" id="99287"/>
    <lineage>
        <taxon>Bacteria</taxon>
        <taxon>Pseudomonadati</taxon>
        <taxon>Pseudomonadota</taxon>
        <taxon>Gammaproteobacteria</taxon>
        <taxon>Enterobacterales</taxon>
        <taxon>Enterobacteriaceae</taxon>
        <taxon>Salmonella</taxon>
    </lineage>
</organism>
<evidence type="ECO:0000269" key="1">
    <source>
    </source>
</evidence>
<evidence type="ECO:0000269" key="2">
    <source>
    </source>
</evidence>
<evidence type="ECO:0000269" key="3">
    <source>
    </source>
</evidence>
<evidence type="ECO:0000303" key="4">
    <source>
    </source>
</evidence>
<evidence type="ECO:0000303" key="5">
    <source>
    </source>
</evidence>
<evidence type="ECO:0000305" key="6"/>
<evidence type="ECO:0000305" key="7">
    <source>
    </source>
</evidence>
<evidence type="ECO:0000305" key="8">
    <source>
    </source>
</evidence>
<evidence type="ECO:0000305" key="9">
    <source>
    </source>
</evidence>
<evidence type="ECO:0007829" key="10">
    <source>
        <dbReference type="PDB" id="1E2T"/>
    </source>
</evidence>
<comment type="function">
    <text evidence="2 3">Catalyzes both the acetyl-CoA-dependent N-acetylation of aromatic amines and the O-acetylation of N-hydroxyarylamines. In vitro, catalyzes the O-acetylation of N-hydroxy-Glu-P-1, and the N-acetylation of isoniazid and 2-aminofluorene.</text>
</comment>
<comment type="catalytic activity">
    <reaction evidence="2 3">
        <text>an arylamine + acetyl-CoA = an N-acetylarylamine + CoA</text>
        <dbReference type="Rhea" id="RHEA:16613"/>
        <dbReference type="ChEBI" id="CHEBI:13790"/>
        <dbReference type="ChEBI" id="CHEBI:50471"/>
        <dbReference type="ChEBI" id="CHEBI:57287"/>
        <dbReference type="ChEBI" id="CHEBI:57288"/>
        <dbReference type="EC" id="2.3.1.5"/>
    </reaction>
</comment>
<comment type="catalytic activity">
    <reaction evidence="2 3">
        <text>an N-hydroxyarylamine + acetyl-CoA = an N-acetoxyarylamine + CoA</text>
        <dbReference type="Rhea" id="RHEA:20277"/>
        <dbReference type="ChEBI" id="CHEBI:13792"/>
        <dbReference type="ChEBI" id="CHEBI:21494"/>
        <dbReference type="ChEBI" id="CHEBI:57287"/>
        <dbReference type="ChEBI" id="CHEBI:57288"/>
        <dbReference type="EC" id="2.3.1.118"/>
    </reaction>
</comment>
<comment type="activity regulation">
    <text evidence="2 3">Inhibited by N-ethylmaleimide and iodoacetamide.</text>
</comment>
<comment type="biophysicochemical properties">
    <kinetics>
        <KM evidence="2">10 uM for acetyl-CoA (in the presence of N-hydroxy-Glu-P-1)</KM>
    </kinetics>
</comment>
<comment type="subunit">
    <text evidence="1">Monomer and homodimer.</text>
</comment>
<comment type="subcellular location">
    <subcellularLocation>
        <location evidence="2 3">Cytoplasm</location>
    </subcellularLocation>
</comment>
<comment type="similarity">
    <text evidence="6">Belongs to the arylamine N-acetyltransferase family.</text>
</comment>
<name>NHOA_SALTY</name>
<keyword id="KW-0002">3D-structure</keyword>
<keyword id="KW-0012">Acyltransferase</keyword>
<keyword id="KW-0963">Cytoplasm</keyword>
<keyword id="KW-1185">Reference proteome</keyword>
<keyword id="KW-0808">Transferase</keyword>
<protein>
    <recommendedName>
        <fullName evidence="4 5">Arylamine N-acetyltransferase / N-hydroxyarylamine O-acetyltransferase</fullName>
        <ecNumber evidence="2 3">2.3.1.118</ecNumber>
        <ecNumber evidence="2 3">2.3.1.5</ecNumber>
    </recommendedName>
    <alternativeName>
        <fullName evidence="6">Arylhydroxamate N,O-acetyltransferase</fullName>
    </alternativeName>
    <alternativeName>
        <fullName>NAT101</fullName>
    </alternativeName>
</protein>